<accession>Q992J0</accession>
<name>RDRP_BOOLV</name>
<evidence type="ECO:0000250" key="1">
    <source>
        <dbReference type="UniProtKB" id="Q66929"/>
    </source>
</evidence>
<evidence type="ECO:0000255" key="2"/>
<evidence type="ECO:0000256" key="3">
    <source>
        <dbReference type="SAM" id="MobiDB-lite"/>
    </source>
</evidence>
<evidence type="ECO:0000305" key="4"/>
<keyword id="KW-1043">Host membrane</keyword>
<keyword id="KW-1045">Host mitochondrion</keyword>
<keyword id="KW-1047">Host mitochondrion outer membrane</keyword>
<keyword id="KW-0472">Membrane</keyword>
<keyword id="KW-0548">Nucleotidyltransferase</keyword>
<keyword id="KW-0696">RNA-directed RNA polymerase</keyword>
<keyword id="KW-0808">Transferase</keyword>
<keyword id="KW-0812">Transmembrane</keyword>
<keyword id="KW-1133">Transmembrane helix</keyword>
<protein>
    <recommendedName>
        <fullName>RNA-directed RNA polymerase</fullName>
        <shortName>RdRp</shortName>
        <ecNumber evidence="1">2.7.7.48</ecNumber>
    </recommendedName>
    <alternativeName>
        <fullName>RNA replicase</fullName>
        <shortName>Protein A</shortName>
    </alternativeName>
</protein>
<sequence length="998" mass="111204">MTIKIILGEHQITRTELLGGIVIVSGCGAVAYCISKFWGYGAIAPYPQSGGNRVTRALQRAVIDKTKTPIKTHFYPLDSLRTVTPRRASDNGHAVSGAVRDAARRLINESIETVGGSKFELNPNPNSTMGPRNHFHFAVGDLAQNFRDDQPAADAFIVGVDVDYYITEPDVLLEHMRPLVLHTFNPKKVSGFDADSPFTINNNLVEYKVSGGAAWVHPVWDWCEAGEFIASRVRSSWFEWLLQLPLRCLGLERVGYHKIHHCRPWTDCPDRALVYTIPQHTVWRFTWIDTEIHTRKLKRITYQDNTKPGWNRLEHVSDNNQLLVSIGREGEHMQITIEKDKLEMLSGLGATQSVNARLIGMGHKDPLYTSMIVQYYTGKKVVLSVAPTVYRPTMPRVHWPVTSDADVPEVSARQYTKPIISDCMMMPMIKRWETMSESIERRVTFVANNKKPSDAVAKIAAEFVSLMNGPFIDLEPLTIEETVERLNKPSQQLQLRAVFEIMGVEPRQVIESFNKNEPGMKSSRIISAFPDILFIVKVSRYTLAYSDAVLHAEHNQHWYYPGRTPVGITDGVCEFVSDCDGQVIETDFSNLDGRVSGWMQRNIAQKAMVQAFRAEYRDEIISFMDTIINCPAKAKRFGFRYEPGMGVKSGSPTTTPHNTQYNACVEYTALKFEYPDANPEDLFSLLGPKCGDDGLARATIQKTINRAAKCYGLELKVEKYNPEVGLCFLSRVFVDPLNTPTTIQDPLRTLRKLHITTRDPTIPIADAACDRVEGYLCTDAHTPLISEYCRMVQRLYGPKTSTRDVREARRSRNKEKPYWLTCDGSWPQHPQDALLMKQIVVSRTGIDEDTVDKLIGRFAAMKDVWEPITLESEESKAAQTIDEEGVAPGSVDESLLKLNDAKQTRSNSGTSGPHTKGGGSGTGNELPRSTKQRAKGPRQSAGLPKQGKANSKPNGNVAAGQAQHGGIPRGKTPSGGKTNARRAPPKAGAQPGAPTNPK</sequence>
<reference key="1">
    <citation type="journal article" date="2001" name="J. Gen. Virol.">
        <title>Comparisons among the larger genome segments of six nodaviruses and their encoded RNA replicases.</title>
        <authorList>
            <person name="Johnson K.N."/>
            <person name="Johnson K.L."/>
            <person name="Dasgupta R."/>
            <person name="Gratsch T."/>
            <person name="Ball L.A."/>
        </authorList>
    </citation>
    <scope>NUCLEOTIDE SEQUENCE [GENOMIC RNA]</scope>
</reference>
<comment type="function">
    <text evidence="1">RNA-dependent RNA polymerase, which replicates the viral genome composed of 2 RNA segments, RNA1 and RNA2. Does not need an exogenous primer. Also possesses a terminal nucleotidyl transferase (TNTase) activity. The TNTase catalyzes the addition of nucleotide to the 3'-end of plus- and minus-stranded RNAs, probably to repair the 3'-end nucleotide loss. Forms the open necked connection to the cytosol of the virus-induced replication vesicles. Mediates viral RNA1 recruitment.</text>
</comment>
<comment type="catalytic activity">
    <reaction evidence="1">
        <text>RNA(n) + a ribonucleoside 5'-triphosphate = RNA(n+1) + diphosphate</text>
        <dbReference type="Rhea" id="RHEA:21248"/>
        <dbReference type="Rhea" id="RHEA-COMP:14527"/>
        <dbReference type="Rhea" id="RHEA-COMP:17342"/>
        <dbReference type="ChEBI" id="CHEBI:33019"/>
        <dbReference type="ChEBI" id="CHEBI:61557"/>
        <dbReference type="ChEBI" id="CHEBI:140395"/>
        <dbReference type="EC" id="2.7.7.48"/>
    </reaction>
    <physiologicalReaction direction="left-to-right" evidence="1">
        <dbReference type="Rhea" id="RHEA:21249"/>
    </physiologicalReaction>
</comment>
<comment type="cofactor">
    <cofactor evidence="1">
        <name>Mn(2+)</name>
        <dbReference type="ChEBI" id="CHEBI:29035"/>
    </cofactor>
    <text evidence="1">For RdRP activity.</text>
</comment>
<comment type="subunit">
    <text evidence="1">Homododecamer. Forms 2 stacked rings of 35-nm in diameter, arranged in a crown-like structure at the opening of virus-induced replication vesicles. Interacts with protein B2.</text>
</comment>
<comment type="subcellular location">
    <subcellularLocation>
        <location evidence="1">Host mitochondrion outer membrane</location>
        <topology evidence="1">Single-pass membrane protein</topology>
    </subcellularLocation>
    <text evidence="1">Part of the 30- to 90-nm invaginations of the host mitochondrial outer membrane that form the viral replication complexes vesicules. Has a N-terminal membrane-spanning mitochondrial anchor.</text>
</comment>
<comment type="domain">
    <text evidence="1">The N-terminus is important for both membrane association and mitochondrial localization. It may also contain a RNA methyltransferase (MTase-GTase) capping domain. The C-terminus contains the RNA-dependent RNA polymerase domain and a structurally disordered region at the very end.</text>
</comment>
<comment type="miscellaneous">
    <text evidence="1">The viral bipartite genome is composed of RNA1 and RNA2.</text>
</comment>
<comment type="similarity">
    <text evidence="4">Belongs to the nodaviridae RNA polymerase family.</text>
</comment>
<proteinExistence type="inferred from homology"/>
<organismHost>
    <name type="scientific">Hepialidae</name>
    <name type="common">ghost moths</name>
    <dbReference type="NCBI Taxonomy" id="41021"/>
</organismHost>
<feature type="chain" id="PRO_0000222445" description="RNA-directed RNA polymerase">
    <location>
        <begin position="1"/>
        <end position="998"/>
    </location>
</feature>
<feature type="transmembrane region" description="Helical" evidence="2">
    <location>
        <begin position="21"/>
        <end position="43"/>
    </location>
</feature>
<feature type="region of interest" description="Cytoplasmic" evidence="1">
    <location>
        <begin position="44"/>
        <end position="998"/>
    </location>
</feature>
<feature type="region of interest" description="Capping" evidence="1">
    <location>
        <begin position="91"/>
        <end position="282"/>
    </location>
</feature>
<feature type="region of interest" description="Disordered" evidence="3">
    <location>
        <begin position="901"/>
        <end position="998"/>
    </location>
</feature>
<feature type="compositionally biased region" description="Low complexity" evidence="3">
    <location>
        <begin position="985"/>
        <end position="998"/>
    </location>
</feature>
<feature type="active site" description="For RdRp/TNTase activity" evidence="1">
    <location>
        <position position="692"/>
    </location>
</feature>
<organism>
    <name type="scientific">Boolarra virus</name>
    <name type="common">BoV</name>
    <dbReference type="NCBI Taxonomy" id="12286"/>
    <lineage>
        <taxon>Viruses</taxon>
        <taxon>Riboviria</taxon>
        <taxon>Orthornavirae</taxon>
        <taxon>Kitrinoviricota</taxon>
        <taxon>Magsaviricetes</taxon>
        <taxon>Nodamuvirales</taxon>
        <taxon>Nodaviridae</taxon>
        <taxon>Alphanodavirus</taxon>
    </lineage>
</organism>
<dbReference type="EC" id="2.7.7.48" evidence="1"/>
<dbReference type="EMBL" id="AF329080">
    <property type="protein sequence ID" value="AAK15751.1"/>
    <property type="molecule type" value="Genomic_RNA"/>
</dbReference>
<dbReference type="RefSeq" id="NP_689439.1">
    <property type="nucleotide sequence ID" value="NC_004142.1"/>
</dbReference>
<dbReference type="SMR" id="Q992J0"/>
<dbReference type="GeneID" id="956656"/>
<dbReference type="KEGG" id="vg:956656"/>
<dbReference type="OrthoDB" id="155at10239"/>
<dbReference type="Proteomes" id="UP000204043">
    <property type="component" value="Genome"/>
</dbReference>
<dbReference type="GO" id="GO:0044193">
    <property type="term" value="C:host cell mitochondrial outer membrane"/>
    <property type="evidence" value="ECO:0007669"/>
    <property type="project" value="UniProtKB-SubCell"/>
</dbReference>
<dbReference type="GO" id="GO:0016020">
    <property type="term" value="C:membrane"/>
    <property type="evidence" value="ECO:0007669"/>
    <property type="project" value="UniProtKB-KW"/>
</dbReference>
<dbReference type="GO" id="GO:0003968">
    <property type="term" value="F:RNA-directed RNA polymerase activity"/>
    <property type="evidence" value="ECO:0007669"/>
    <property type="project" value="UniProtKB-KW"/>
</dbReference>
<dbReference type="CDD" id="cd23173">
    <property type="entry name" value="ps-ssRNAv_Nodaviridae_RdRp"/>
    <property type="match status" value="1"/>
</dbReference>
<dbReference type="InterPro" id="IPR043502">
    <property type="entry name" value="DNA/RNA_pol_sf"/>
</dbReference>
<dbReference type="InterPro" id="IPR043647">
    <property type="entry name" value="Noda_Vmethyltr_dom"/>
</dbReference>
<dbReference type="Pfam" id="PF19222">
    <property type="entry name" value="Noda_Vmethyltr"/>
    <property type="match status" value="1"/>
</dbReference>
<dbReference type="SUPFAM" id="SSF56672">
    <property type="entry name" value="DNA/RNA polymerases"/>
    <property type="match status" value="1"/>
</dbReference>